<accession>P9WEX1</accession>
<comment type="function">
    <text evidence="2">Terpene cyclase; part of the gene cluster that mediates the biosynthesis of the diterpenoid pyrones subglutinols A and B (PubMed:32286350). The first step of the pathway is the synthesis of the alpha-pyrone moiety by the polyketide synthase dpasA via condensation of one acetyl-CoA starter unit with 3 malonyl-CoA units and 2 methylations (PubMed:32286350). The alpha-pyrone is then combined with geranylgeranyl pyrophosphate (GGPP) formed by the GGPP synthase dpasD through the action of the prenyltransferase dpasC to yield a linear alpha-pyrone diterpenoid (PubMed:32286350). Subsequent steps in the diterpenoid pyrone biosynthetic pathway involve the decalin core formation, which is initiated by the epoxidation of the C10-C11 olefin by the FAD-dependent oxidoreductase dpasE, and is followed by a cyclization cascade catalyzed by the terpene cyclase dpasB (PubMed:32286350). The FAD-linked oxidoreductase dpasF is then involved in tetrahydrofuran (THF) ring formation at the C5 unit to complete the formation of subglutinols A and B (PubMed:32286350). DpasF possesses also an additional catalytic ability of multi-step oxidations to generate a new DDP analog with an enone system at the C5 named FDDP A (PubMed:32286350).</text>
</comment>
<comment type="pathway">
    <text evidence="2">Secondary metabolite biosynthesis; terpenoid biosynthesis.</text>
</comment>
<comment type="subcellular location">
    <subcellularLocation>
        <location evidence="1">Membrane</location>
        <topology evidence="1">Multi-pass membrane protein</topology>
    </subcellularLocation>
</comment>
<comment type="biotechnology">
    <text evidence="2">Diterpenoid pyrones display various biological activities and subglutinol A shows insecticidal and anti-HIV activities.</text>
</comment>
<comment type="similarity">
    <text evidence="4">Belongs to the paxB family.</text>
</comment>
<dbReference type="EC" id="4.2.3.-" evidence="2"/>
<dbReference type="UniPathway" id="UPA00213"/>
<dbReference type="GO" id="GO:0016020">
    <property type="term" value="C:membrane"/>
    <property type="evidence" value="ECO:0007669"/>
    <property type="project" value="UniProtKB-SubCell"/>
</dbReference>
<dbReference type="GO" id="GO:0016829">
    <property type="term" value="F:lyase activity"/>
    <property type="evidence" value="ECO:0007669"/>
    <property type="project" value="UniProtKB-KW"/>
</dbReference>
<dbReference type="GO" id="GO:0016114">
    <property type="term" value="P:terpenoid biosynthetic process"/>
    <property type="evidence" value="ECO:0007669"/>
    <property type="project" value="UniProtKB-UniPathway"/>
</dbReference>
<dbReference type="InterPro" id="IPR039020">
    <property type="entry name" value="PaxB-like"/>
</dbReference>
<dbReference type="PANTHER" id="PTHR42038">
    <property type="match status" value="1"/>
</dbReference>
<dbReference type="PANTHER" id="PTHR42038:SF2">
    <property type="entry name" value="TERPENE CYCLASE AUSL"/>
    <property type="match status" value="1"/>
</dbReference>
<dbReference type="Pfam" id="PF25129">
    <property type="entry name" value="Pyr4-TMTC"/>
    <property type="match status" value="1"/>
</dbReference>
<keyword id="KW-0456">Lyase</keyword>
<keyword id="KW-0472">Membrane</keyword>
<keyword id="KW-0812">Transmembrane</keyword>
<keyword id="KW-1133">Transmembrane helix</keyword>
<protein>
    <recommendedName>
        <fullName evidence="3">Terpene cyclase dpasB</fullName>
        <ecNumber evidence="2">4.2.3.-</ecNumber>
    </recommendedName>
    <alternativeName>
        <fullName evidence="3">Diterpenoid pyrone biosynthesis cluster protein B</fullName>
    </alternativeName>
</protein>
<name>DPASB_APISA</name>
<proteinExistence type="evidence at protein level"/>
<gene>
    <name evidence="3" type="primary">dpasB</name>
</gene>
<sequence>MDVHDLTRAPPEYLEVVWVTDVCKLVMAVGWLSNYIGMIAKSIKEQTYSMALMPLCCNFAWEFTYFFIYPYKVPMERNIHTLAFLLNCGVMYTAVRYGAREWGHAPLVQRNLPVIFVVCIACWVSAHVAFAEQYGPSLAQAVSGFACQILLSAGGTCQLLCRGHSRGASYKLWLARFMGSFALILPNMLRYKYWRDDHQYIGSPLYIWFLGMFLFLDGSYGFVLWYVRRHEREQVLVAKPKVQ</sequence>
<evidence type="ECO:0000255" key="1"/>
<evidence type="ECO:0000269" key="2">
    <source>
    </source>
</evidence>
<evidence type="ECO:0000303" key="3">
    <source>
    </source>
</evidence>
<evidence type="ECO:0000305" key="4"/>
<feature type="chain" id="PRO_0000451527" description="Terpene cyclase dpasB">
    <location>
        <begin position="1"/>
        <end position="243"/>
    </location>
</feature>
<feature type="transmembrane region" description="Helical" evidence="1">
    <location>
        <begin position="16"/>
        <end position="36"/>
    </location>
</feature>
<feature type="transmembrane region" description="Helical" evidence="1">
    <location>
        <begin position="50"/>
        <end position="70"/>
    </location>
</feature>
<feature type="transmembrane region" description="Helical" evidence="1">
    <location>
        <begin position="79"/>
        <end position="99"/>
    </location>
</feature>
<feature type="transmembrane region" description="Helical" evidence="1">
    <location>
        <begin position="112"/>
        <end position="132"/>
    </location>
</feature>
<feature type="transmembrane region" description="Helical" evidence="1">
    <location>
        <begin position="141"/>
        <end position="161"/>
    </location>
</feature>
<feature type="transmembrane region" description="Helical" evidence="1">
    <location>
        <begin position="172"/>
        <end position="189"/>
    </location>
</feature>
<feature type="transmembrane region" description="Helical" evidence="1">
    <location>
        <begin position="207"/>
        <end position="227"/>
    </location>
</feature>
<reference key="1">
    <citation type="journal article" date="2020" name="Nat. Commun.">
        <title>Synthetic biology based construction of biological activity-related library of fungal decalin-containing diterpenoid pyrones.</title>
        <authorList>
            <person name="Tsukada K."/>
            <person name="Shinki S."/>
            <person name="Kaneko A."/>
            <person name="Murakami K."/>
            <person name="Irie K."/>
            <person name="Murai M."/>
            <person name="Miyoshi H."/>
            <person name="Dan S."/>
            <person name="Kawaji K."/>
            <person name="Hayashi H."/>
            <person name="Kodama E.N."/>
            <person name="Hori A."/>
            <person name="Salim E."/>
            <person name="Kuraishi T."/>
            <person name="Hirata N."/>
            <person name="Kanda Y."/>
            <person name="Asai T."/>
        </authorList>
    </citation>
    <scope>NUCLEOTIDE SEQUENCE [GENOMIC DNA]</scope>
    <scope>FUNCTION</scope>
    <scope>CATALYTIC ACTIVITY</scope>
    <scope>PATHWAY</scope>
    <scope>BIOTECHNOLOGY</scope>
</reference>
<organism>
    <name type="scientific">Apiospora sacchari</name>
    <name type="common">Arthrinium sacchari</name>
    <dbReference type="NCBI Taxonomy" id="166626"/>
    <lineage>
        <taxon>Eukaryota</taxon>
        <taxon>Fungi</taxon>
        <taxon>Dikarya</taxon>
        <taxon>Ascomycota</taxon>
        <taxon>Pezizomycotina</taxon>
        <taxon>Sordariomycetes</taxon>
        <taxon>Xylariomycetidae</taxon>
        <taxon>Amphisphaeriales</taxon>
        <taxon>Apiosporaceae</taxon>
        <taxon>Apiospora</taxon>
    </lineage>
</organism>